<gene>
    <name evidence="1" type="primary">rpsR</name>
    <name type="ordered locus">SUN_0426</name>
</gene>
<reference key="1">
    <citation type="journal article" date="2007" name="Proc. Natl. Acad. Sci. U.S.A.">
        <title>Deep-sea vent epsilon-proteobacterial genomes provide insights into emergence of pathogens.</title>
        <authorList>
            <person name="Nakagawa S."/>
            <person name="Takaki Y."/>
            <person name="Shimamura S."/>
            <person name="Reysenbach A.-L."/>
            <person name="Takai K."/>
            <person name="Horikoshi K."/>
        </authorList>
    </citation>
    <scope>NUCLEOTIDE SEQUENCE [LARGE SCALE GENOMIC DNA]</scope>
    <source>
        <strain>NBC37-1</strain>
    </source>
</reference>
<dbReference type="EMBL" id="AP009179">
    <property type="protein sequence ID" value="BAF71386.1"/>
    <property type="molecule type" value="Genomic_DNA"/>
</dbReference>
<dbReference type="RefSeq" id="WP_011980119.1">
    <property type="nucleotide sequence ID" value="NC_009663.1"/>
</dbReference>
<dbReference type="SMR" id="A6Q7C7"/>
<dbReference type="STRING" id="387093.SUN_0426"/>
<dbReference type="KEGG" id="sun:SUN_0426"/>
<dbReference type="eggNOG" id="COG0238">
    <property type="taxonomic scope" value="Bacteria"/>
</dbReference>
<dbReference type="HOGENOM" id="CLU_148710_2_2_7"/>
<dbReference type="OrthoDB" id="9812008at2"/>
<dbReference type="Proteomes" id="UP000006378">
    <property type="component" value="Chromosome"/>
</dbReference>
<dbReference type="GO" id="GO:0022627">
    <property type="term" value="C:cytosolic small ribosomal subunit"/>
    <property type="evidence" value="ECO:0007669"/>
    <property type="project" value="TreeGrafter"/>
</dbReference>
<dbReference type="GO" id="GO:0070181">
    <property type="term" value="F:small ribosomal subunit rRNA binding"/>
    <property type="evidence" value="ECO:0007669"/>
    <property type="project" value="TreeGrafter"/>
</dbReference>
<dbReference type="GO" id="GO:0003735">
    <property type="term" value="F:structural constituent of ribosome"/>
    <property type="evidence" value="ECO:0007669"/>
    <property type="project" value="InterPro"/>
</dbReference>
<dbReference type="GO" id="GO:0006412">
    <property type="term" value="P:translation"/>
    <property type="evidence" value="ECO:0007669"/>
    <property type="project" value="UniProtKB-UniRule"/>
</dbReference>
<dbReference type="Gene3D" id="4.10.640.10">
    <property type="entry name" value="Ribosomal protein S18"/>
    <property type="match status" value="1"/>
</dbReference>
<dbReference type="HAMAP" id="MF_00270">
    <property type="entry name" value="Ribosomal_bS18"/>
    <property type="match status" value="1"/>
</dbReference>
<dbReference type="InterPro" id="IPR001648">
    <property type="entry name" value="Ribosomal_bS18"/>
</dbReference>
<dbReference type="InterPro" id="IPR036870">
    <property type="entry name" value="Ribosomal_bS18_sf"/>
</dbReference>
<dbReference type="NCBIfam" id="TIGR00165">
    <property type="entry name" value="S18"/>
    <property type="match status" value="1"/>
</dbReference>
<dbReference type="PANTHER" id="PTHR13479">
    <property type="entry name" value="30S RIBOSOMAL PROTEIN S18"/>
    <property type="match status" value="1"/>
</dbReference>
<dbReference type="PANTHER" id="PTHR13479:SF40">
    <property type="entry name" value="SMALL RIBOSOMAL SUBUNIT PROTEIN BS18M"/>
    <property type="match status" value="1"/>
</dbReference>
<dbReference type="Pfam" id="PF01084">
    <property type="entry name" value="Ribosomal_S18"/>
    <property type="match status" value="1"/>
</dbReference>
<dbReference type="PRINTS" id="PR00974">
    <property type="entry name" value="RIBOSOMALS18"/>
</dbReference>
<dbReference type="SUPFAM" id="SSF46911">
    <property type="entry name" value="Ribosomal protein S18"/>
    <property type="match status" value="1"/>
</dbReference>
<accession>A6Q7C7</accession>
<proteinExistence type="inferred from homology"/>
<feature type="chain" id="PRO_1000003638" description="Small ribosomal subunit protein bS18">
    <location>
        <begin position="1"/>
        <end position="87"/>
    </location>
</feature>
<protein>
    <recommendedName>
        <fullName evidence="1">Small ribosomal subunit protein bS18</fullName>
    </recommendedName>
    <alternativeName>
        <fullName evidence="2">30S ribosomal protein S18</fullName>
    </alternativeName>
</protein>
<name>RS18_SULNB</name>
<evidence type="ECO:0000255" key="1">
    <source>
        <dbReference type="HAMAP-Rule" id="MF_00270"/>
    </source>
</evidence>
<evidence type="ECO:0000305" key="2"/>
<comment type="function">
    <text evidence="1">Binds as a heterodimer with protein bS6 to the central domain of the 16S rRNA, where it helps stabilize the platform of the 30S subunit.</text>
</comment>
<comment type="subunit">
    <text evidence="1">Part of the 30S ribosomal subunit. Forms a tight heterodimer with protein bS6.</text>
</comment>
<comment type="similarity">
    <text evidence="1">Belongs to the bacterial ribosomal protein bS18 family.</text>
</comment>
<organism>
    <name type="scientific">Sulfurovum sp. (strain NBC37-1)</name>
    <dbReference type="NCBI Taxonomy" id="387093"/>
    <lineage>
        <taxon>Bacteria</taxon>
        <taxon>Pseudomonadati</taxon>
        <taxon>Campylobacterota</taxon>
        <taxon>Epsilonproteobacteria</taxon>
        <taxon>Campylobacterales</taxon>
        <taxon>Sulfurovaceae</taxon>
        <taxon>Sulfurovum</taxon>
    </lineage>
</organism>
<keyword id="KW-0687">Ribonucleoprotein</keyword>
<keyword id="KW-0689">Ribosomal protein</keyword>
<keyword id="KW-0694">RNA-binding</keyword>
<keyword id="KW-0699">rRNA-binding</keyword>
<sequence length="87" mass="10557">MAERRKFKKRFCKYCEQKVDFIDYKDLNSLKFSLSERFKIMPRRLTGNCKRHQEMVTVAIKRARQTALIPYIVDRKNVVENPFELIK</sequence>